<dbReference type="EMBL" id="U17641">
    <property type="protein sequence ID" value="AAA87901.1"/>
    <property type="molecule type" value="mRNA"/>
</dbReference>
<dbReference type="EMBL" id="CM002236">
    <property type="protein sequence ID" value="ESA43772.1"/>
    <property type="molecule type" value="Genomic_DNA"/>
</dbReference>
<dbReference type="RefSeq" id="XP_011393174.1">
    <property type="nucleotide sequence ID" value="XM_011394872.1"/>
</dbReference>
<dbReference type="SMR" id="Q01278"/>
<dbReference type="FunCoup" id="Q01278">
    <property type="interactions" value="704"/>
</dbReference>
<dbReference type="STRING" id="367110.Q01278"/>
<dbReference type="PaxDb" id="5141-EFNCRP00000007440"/>
<dbReference type="EnsemblFungi" id="ESA43772">
    <property type="protein sequence ID" value="ESA43772"/>
    <property type="gene ID" value="NCU07446"/>
</dbReference>
<dbReference type="GeneID" id="3880773"/>
<dbReference type="KEGG" id="ncr:NCU07446"/>
<dbReference type="VEuPathDB" id="FungiDB:NCU07446"/>
<dbReference type="InParanoid" id="Q01278"/>
<dbReference type="OrthoDB" id="10263003at2759"/>
<dbReference type="Proteomes" id="UP000001805">
    <property type="component" value="Chromosome 1, Linkage Group I"/>
</dbReference>
<dbReference type="GO" id="GO:0000329">
    <property type="term" value="C:fungal-type vacuole membrane"/>
    <property type="evidence" value="ECO:0007669"/>
    <property type="project" value="EnsemblFungi"/>
</dbReference>
<dbReference type="GO" id="GO:0045121">
    <property type="term" value="C:membrane raft"/>
    <property type="evidence" value="ECO:0007669"/>
    <property type="project" value="EnsemblFungi"/>
</dbReference>
<dbReference type="GO" id="GO:0000221">
    <property type="term" value="C:vacuolar proton-transporting V-type ATPase, V1 domain"/>
    <property type="evidence" value="ECO:0000250"/>
    <property type="project" value="UniProtKB"/>
</dbReference>
<dbReference type="GO" id="GO:0046961">
    <property type="term" value="F:proton-transporting ATPase activity, rotational mechanism"/>
    <property type="evidence" value="ECO:0000318"/>
    <property type="project" value="GO_Central"/>
</dbReference>
<dbReference type="Gene3D" id="6.10.250.1620">
    <property type="match status" value="1"/>
</dbReference>
<dbReference type="Gene3D" id="3.30.2320.30">
    <property type="entry name" value="ATP synthase, E subunit, C-terminal"/>
    <property type="match status" value="1"/>
</dbReference>
<dbReference type="HAMAP" id="MF_00311">
    <property type="entry name" value="ATP_synth_E_arch"/>
    <property type="match status" value="1"/>
</dbReference>
<dbReference type="InterPro" id="IPR038495">
    <property type="entry name" value="ATPase_E_C"/>
</dbReference>
<dbReference type="InterPro" id="IPR002842">
    <property type="entry name" value="ATPase_V1_Esu"/>
</dbReference>
<dbReference type="PANTHER" id="PTHR45715">
    <property type="entry name" value="ATPASE H+-TRANSPORTING V1 SUBUNIT E1A-RELATED"/>
    <property type="match status" value="1"/>
</dbReference>
<dbReference type="Pfam" id="PF01991">
    <property type="entry name" value="vATP-synt_E"/>
    <property type="match status" value="1"/>
</dbReference>
<dbReference type="SUPFAM" id="SSF160527">
    <property type="entry name" value="V-type ATPase subunit E-like"/>
    <property type="match status" value="1"/>
</dbReference>
<comment type="function">
    <text evidence="1">Subunit of the V1 complex of vacuolar(H+)-ATPase (V-ATPase), a multisubunit enzyme composed of a peripheral complex (V1) that hydrolyzes ATP and a membrane integral complex (V0) that translocates protons (By similarity). V-ATPase is responsible for acidifying and maintaining the pH of intracellular compartments (By similarity).</text>
</comment>
<comment type="subunit">
    <text evidence="1">V-ATPase is a heteromultimeric enzyme composed of a peripheral catalytic V1 complex (components A to H) attached to an integral membrane V0 proton pore complex (components: a, c, c', c'', d, e, f and VOA1).</text>
</comment>
<comment type="subcellular location">
    <subcellularLocation>
        <location evidence="1">Vacuole membrane</location>
        <topology evidence="1">Peripheral membrane protein</topology>
        <orientation evidence="3">Cytoplasmic side</orientation>
    </subcellularLocation>
</comment>
<comment type="similarity">
    <text evidence="3">Belongs to the V-ATPase E subunit family.</text>
</comment>
<evidence type="ECO:0000250" key="1">
    <source>
        <dbReference type="UniProtKB" id="P22203"/>
    </source>
</evidence>
<evidence type="ECO:0000303" key="2">
    <source>
    </source>
</evidence>
<evidence type="ECO:0000305" key="3"/>
<name>VATE_NEUCR</name>
<proteinExistence type="evidence at transcript level"/>
<keyword id="KW-0375">Hydrogen ion transport</keyword>
<keyword id="KW-0406">Ion transport</keyword>
<keyword id="KW-0472">Membrane</keyword>
<keyword id="KW-1185">Reference proteome</keyword>
<keyword id="KW-0813">Transport</keyword>
<keyword id="KW-0926">Vacuole</keyword>
<sequence>MSQVHALSDDQVGQELRKMTAFIKQEAEEKAREIQIKADEEFAIEKSKLVRQETDAIDSAYAKKFKQAQMSQQITRSTMANKTRLRVLGARQELLDEIFEAASAQLGQATHDLGRYKDILRDLILEGFYAMNEPELVIRARQADYDAVREAAGWASAQYKHKTDKDVKATIDAENPVPEGSAGGIIIVGGNGKIDIDNTFEARLTLLKDSALPAMRKALFGENPNRKFFD</sequence>
<organism>
    <name type="scientific">Neurospora crassa (strain ATCC 24698 / 74-OR23-1A / CBS 708.71 / DSM 1257 / FGSC 987)</name>
    <dbReference type="NCBI Taxonomy" id="367110"/>
    <lineage>
        <taxon>Eukaryota</taxon>
        <taxon>Fungi</taxon>
        <taxon>Dikarya</taxon>
        <taxon>Ascomycota</taxon>
        <taxon>Pezizomycotina</taxon>
        <taxon>Sordariomycetes</taxon>
        <taxon>Sordariomycetidae</taxon>
        <taxon>Sordariales</taxon>
        <taxon>Sordariaceae</taxon>
        <taxon>Neurospora</taxon>
    </lineage>
</organism>
<reference key="1">
    <citation type="journal article" date="1995" name="Biochim. Biophys. Acta">
        <title>Isolation of the vma-4 gene encoding the 26 kDa subunit of the Neurospora crassa vacuolar ATPase.</title>
        <authorList>
            <person name="Bowman E.J."/>
            <person name="Steinhardt A."/>
            <person name="Bowman B.J."/>
        </authorList>
    </citation>
    <scope>NUCLEOTIDE SEQUENCE [MRNA]</scope>
    <source>
        <strain>74A</strain>
    </source>
</reference>
<reference key="2">
    <citation type="journal article" date="2003" name="Nature">
        <title>The genome sequence of the filamentous fungus Neurospora crassa.</title>
        <authorList>
            <person name="Galagan J.E."/>
            <person name="Calvo S.E."/>
            <person name="Borkovich K.A."/>
            <person name="Selker E.U."/>
            <person name="Read N.D."/>
            <person name="Jaffe D.B."/>
            <person name="FitzHugh W."/>
            <person name="Ma L.-J."/>
            <person name="Smirnov S."/>
            <person name="Purcell S."/>
            <person name="Rehman B."/>
            <person name="Elkins T."/>
            <person name="Engels R."/>
            <person name="Wang S."/>
            <person name="Nielsen C.B."/>
            <person name="Butler J."/>
            <person name="Endrizzi M."/>
            <person name="Qui D."/>
            <person name="Ianakiev P."/>
            <person name="Bell-Pedersen D."/>
            <person name="Nelson M.A."/>
            <person name="Werner-Washburne M."/>
            <person name="Selitrennikoff C.P."/>
            <person name="Kinsey J.A."/>
            <person name="Braun E.L."/>
            <person name="Zelter A."/>
            <person name="Schulte U."/>
            <person name="Kothe G.O."/>
            <person name="Jedd G."/>
            <person name="Mewes H.-W."/>
            <person name="Staben C."/>
            <person name="Marcotte E."/>
            <person name="Greenberg D."/>
            <person name="Roy A."/>
            <person name="Foley K."/>
            <person name="Naylor J."/>
            <person name="Stange-Thomann N."/>
            <person name="Barrett R."/>
            <person name="Gnerre S."/>
            <person name="Kamal M."/>
            <person name="Kamvysselis M."/>
            <person name="Mauceli E.W."/>
            <person name="Bielke C."/>
            <person name="Rudd S."/>
            <person name="Frishman D."/>
            <person name="Krystofova S."/>
            <person name="Rasmussen C."/>
            <person name="Metzenberg R.L."/>
            <person name="Perkins D.D."/>
            <person name="Kroken S."/>
            <person name="Cogoni C."/>
            <person name="Macino G."/>
            <person name="Catcheside D.E.A."/>
            <person name="Li W."/>
            <person name="Pratt R.J."/>
            <person name="Osmani S.A."/>
            <person name="DeSouza C.P.C."/>
            <person name="Glass N.L."/>
            <person name="Orbach M.J."/>
            <person name="Berglund J.A."/>
            <person name="Voelker R."/>
            <person name="Yarden O."/>
            <person name="Plamann M."/>
            <person name="Seiler S."/>
            <person name="Dunlap J.C."/>
            <person name="Radford A."/>
            <person name="Aramayo R."/>
            <person name="Natvig D.O."/>
            <person name="Alex L.A."/>
            <person name="Mannhaupt G."/>
            <person name="Ebbole D.J."/>
            <person name="Freitag M."/>
            <person name="Paulsen I."/>
            <person name="Sachs M.S."/>
            <person name="Lander E.S."/>
            <person name="Nusbaum C."/>
            <person name="Birren B.W."/>
        </authorList>
    </citation>
    <scope>NUCLEOTIDE SEQUENCE [LARGE SCALE GENOMIC DNA]</scope>
    <source>
        <strain>ATCC 24698 / 74-OR23-1A / CBS 708.71 / DSM 1257 / FGSC 987</strain>
    </source>
</reference>
<gene>
    <name evidence="2" type="primary">vma-4</name>
    <name type="ORF">NCU07446</name>
</gene>
<accession>Q01278</accession>
<accession>Q7RVK9</accession>
<accession>V5INX5</accession>
<feature type="chain" id="PRO_0000117308" description="V-type proton ATPase subunit E">
    <location>
        <begin position="1"/>
        <end position="230"/>
    </location>
</feature>
<protein>
    <recommendedName>
        <fullName>V-type proton ATPase subunit E</fullName>
        <shortName>V-ATPase subunit E</shortName>
    </recommendedName>
    <alternativeName>
        <fullName>V-ATPase 26 kDa subunit</fullName>
    </alternativeName>
    <alternativeName>
        <fullName>Vacuolar proton pump subunit E</fullName>
    </alternativeName>
</protein>